<gene>
    <name evidence="1" type="primary">prfA</name>
    <name type="ordered locus">SPD_0906</name>
</gene>
<protein>
    <recommendedName>
        <fullName evidence="1">Peptide chain release factor 1</fullName>
        <shortName evidence="1">RF-1</shortName>
    </recommendedName>
</protein>
<evidence type="ECO:0000255" key="1">
    <source>
        <dbReference type="HAMAP-Rule" id="MF_00093"/>
    </source>
</evidence>
<keyword id="KW-0963">Cytoplasm</keyword>
<keyword id="KW-0488">Methylation</keyword>
<keyword id="KW-0648">Protein biosynthesis</keyword>
<keyword id="KW-1185">Reference proteome</keyword>
<reference key="1">
    <citation type="journal article" date="2007" name="J. Bacteriol.">
        <title>Genome sequence of Avery's virulent serotype 2 strain D39 of Streptococcus pneumoniae and comparison with that of unencapsulated laboratory strain R6.</title>
        <authorList>
            <person name="Lanie J.A."/>
            <person name="Ng W.-L."/>
            <person name="Kazmierczak K.M."/>
            <person name="Andrzejewski T.M."/>
            <person name="Davidsen T.M."/>
            <person name="Wayne K.J."/>
            <person name="Tettelin H."/>
            <person name="Glass J.I."/>
            <person name="Winkler M.E."/>
        </authorList>
    </citation>
    <scope>NUCLEOTIDE SEQUENCE [LARGE SCALE GENOMIC DNA]</scope>
    <source>
        <strain>D39 / NCTC 7466</strain>
    </source>
</reference>
<comment type="function">
    <text evidence="1">Peptide chain release factor 1 directs the termination of translation in response to the peptide chain termination codons UAG and UAA.</text>
</comment>
<comment type="subcellular location">
    <subcellularLocation>
        <location evidence="1">Cytoplasm</location>
    </subcellularLocation>
</comment>
<comment type="PTM">
    <text evidence="1">Methylated by PrmC. Methylation increases the termination efficiency of RF1.</text>
</comment>
<comment type="similarity">
    <text evidence="1">Belongs to the prokaryotic/mitochondrial release factor family.</text>
</comment>
<dbReference type="EMBL" id="CP000410">
    <property type="protein sequence ID" value="ABJ55449.1"/>
    <property type="molecule type" value="Genomic_DNA"/>
</dbReference>
<dbReference type="RefSeq" id="WP_001028801.1">
    <property type="nucleotide sequence ID" value="NZ_JAMLJR010000011.1"/>
</dbReference>
<dbReference type="SMR" id="Q04KR4"/>
<dbReference type="PaxDb" id="373153-SPD_0906"/>
<dbReference type="GeneID" id="45653642"/>
<dbReference type="KEGG" id="spd:SPD_0906"/>
<dbReference type="eggNOG" id="COG0216">
    <property type="taxonomic scope" value="Bacteria"/>
</dbReference>
<dbReference type="HOGENOM" id="CLU_036856_0_1_9"/>
<dbReference type="BioCyc" id="SPNE373153:G1G6V-993-MONOMER"/>
<dbReference type="Proteomes" id="UP000001452">
    <property type="component" value="Chromosome"/>
</dbReference>
<dbReference type="GO" id="GO:0005737">
    <property type="term" value="C:cytoplasm"/>
    <property type="evidence" value="ECO:0007669"/>
    <property type="project" value="UniProtKB-SubCell"/>
</dbReference>
<dbReference type="GO" id="GO:0016149">
    <property type="term" value="F:translation release factor activity, codon specific"/>
    <property type="evidence" value="ECO:0007669"/>
    <property type="project" value="UniProtKB-UniRule"/>
</dbReference>
<dbReference type="FunFam" id="3.30.160.20:FF:000027">
    <property type="entry name" value="Peptide chain release factor 1"/>
    <property type="match status" value="1"/>
</dbReference>
<dbReference type="FunFam" id="3.30.70.1660:FF:000002">
    <property type="entry name" value="Peptide chain release factor 1"/>
    <property type="match status" value="1"/>
</dbReference>
<dbReference type="FunFam" id="3.30.70.1660:FF:000004">
    <property type="entry name" value="Peptide chain release factor 1"/>
    <property type="match status" value="1"/>
</dbReference>
<dbReference type="Gene3D" id="3.30.160.20">
    <property type="match status" value="1"/>
</dbReference>
<dbReference type="Gene3D" id="3.30.70.1660">
    <property type="match status" value="2"/>
</dbReference>
<dbReference type="Gene3D" id="6.10.140.1950">
    <property type="match status" value="1"/>
</dbReference>
<dbReference type="HAMAP" id="MF_00093">
    <property type="entry name" value="Rel_fac_1"/>
    <property type="match status" value="1"/>
</dbReference>
<dbReference type="InterPro" id="IPR005139">
    <property type="entry name" value="PCRF"/>
</dbReference>
<dbReference type="InterPro" id="IPR000352">
    <property type="entry name" value="Pep_chain_release_fac_I"/>
</dbReference>
<dbReference type="InterPro" id="IPR045853">
    <property type="entry name" value="Pep_chain_release_fac_I_sf"/>
</dbReference>
<dbReference type="InterPro" id="IPR050057">
    <property type="entry name" value="Prokaryotic/Mito_RF"/>
</dbReference>
<dbReference type="InterPro" id="IPR004373">
    <property type="entry name" value="RF-1"/>
</dbReference>
<dbReference type="NCBIfam" id="TIGR00019">
    <property type="entry name" value="prfA"/>
    <property type="match status" value="1"/>
</dbReference>
<dbReference type="NCBIfam" id="NF001859">
    <property type="entry name" value="PRK00591.1"/>
    <property type="match status" value="1"/>
</dbReference>
<dbReference type="PANTHER" id="PTHR43804">
    <property type="entry name" value="LD18447P"/>
    <property type="match status" value="1"/>
</dbReference>
<dbReference type="PANTHER" id="PTHR43804:SF7">
    <property type="entry name" value="LD18447P"/>
    <property type="match status" value="1"/>
</dbReference>
<dbReference type="Pfam" id="PF03462">
    <property type="entry name" value="PCRF"/>
    <property type="match status" value="1"/>
</dbReference>
<dbReference type="Pfam" id="PF00472">
    <property type="entry name" value="RF-1"/>
    <property type="match status" value="1"/>
</dbReference>
<dbReference type="SMART" id="SM00937">
    <property type="entry name" value="PCRF"/>
    <property type="match status" value="1"/>
</dbReference>
<dbReference type="SUPFAM" id="SSF75620">
    <property type="entry name" value="Release factor"/>
    <property type="match status" value="1"/>
</dbReference>
<dbReference type="PROSITE" id="PS00745">
    <property type="entry name" value="RF_PROK_I"/>
    <property type="match status" value="1"/>
</dbReference>
<proteinExistence type="inferred from homology"/>
<organism>
    <name type="scientific">Streptococcus pneumoniae serotype 2 (strain D39 / NCTC 7466)</name>
    <dbReference type="NCBI Taxonomy" id="373153"/>
    <lineage>
        <taxon>Bacteria</taxon>
        <taxon>Bacillati</taxon>
        <taxon>Bacillota</taxon>
        <taxon>Bacilli</taxon>
        <taxon>Lactobacillales</taxon>
        <taxon>Streptococcaceae</taxon>
        <taxon>Streptococcus</taxon>
    </lineage>
</organism>
<sequence>MNIYDQLQAVEDRYEELGELLSDPDVVSDTKRFMELSKEEASNRDTVIAYREYKQVLQNIVDAEEMIKESGGDADLEEMAKQELKDAKAEKEEYEEKLKILLLPKDPNDDKNIILEIRGAAGGDEAALFAGDLLTMYQKYAEAQGWRFEVMEASMNGVGGFKEVVAMVSGQSVYSKLKYESGAHRVQRVPVTESQGRVHTSTATVLVMPEVEEVEYDIDPKDLRVDIYHASGAGGQNVNKVATAVRIVHLPTNIKVEMQEERTQQKNREKAMKIIRARVADHFAQIAQDEQDAERKSTIGTGDRSERIRTYNFPQNRVTDHRIGLTLQKLDTILSGKLDEVVDALVLYDQTQKLEELNK</sequence>
<feature type="chain" id="PRO_1000004957" description="Peptide chain release factor 1">
    <location>
        <begin position="1"/>
        <end position="359"/>
    </location>
</feature>
<feature type="modified residue" description="N5-methylglutamine" evidence="1">
    <location>
        <position position="236"/>
    </location>
</feature>
<name>RF1_STRP2</name>
<accession>Q04KR4</accession>